<gene>
    <name type="primary">Smtnl1</name>
</gene>
<feature type="chain" id="PRO_0000317276" description="Smoothelin-like protein 1">
    <location>
        <begin position="1"/>
        <end position="459"/>
    </location>
</feature>
<feature type="domain" description="Calponin-homology (CH)" evidence="2">
    <location>
        <begin position="343"/>
        <end position="449"/>
    </location>
</feature>
<feature type="region of interest" description="Disordered" evidence="3">
    <location>
        <begin position="1"/>
        <end position="314"/>
    </location>
</feature>
<feature type="region of interest" description="Calmodulin-binding">
    <location>
        <begin position="441"/>
        <end position="459"/>
    </location>
</feature>
<feature type="coiled-coil region" evidence="1">
    <location>
        <begin position="124"/>
        <end position="154"/>
    </location>
</feature>
<feature type="compositionally biased region" description="Polar residues" evidence="3">
    <location>
        <begin position="1"/>
        <end position="27"/>
    </location>
</feature>
<feature type="compositionally biased region" description="Basic and acidic residues" evidence="3">
    <location>
        <begin position="42"/>
        <end position="55"/>
    </location>
</feature>
<feature type="compositionally biased region" description="Basic and acidic residues" evidence="3">
    <location>
        <begin position="75"/>
        <end position="105"/>
    </location>
</feature>
<feature type="compositionally biased region" description="Basic and acidic residues" evidence="3">
    <location>
        <begin position="112"/>
        <end position="168"/>
    </location>
</feature>
<feature type="compositionally biased region" description="Basic and acidic residues" evidence="3">
    <location>
        <begin position="185"/>
        <end position="211"/>
    </location>
</feature>
<feature type="compositionally biased region" description="Basic and acidic residues" evidence="3">
    <location>
        <begin position="221"/>
        <end position="232"/>
    </location>
</feature>
<feature type="compositionally biased region" description="Low complexity" evidence="3">
    <location>
        <begin position="260"/>
        <end position="283"/>
    </location>
</feature>
<feature type="compositionally biased region" description="Basic and acidic residues" evidence="3">
    <location>
        <begin position="287"/>
        <end position="300"/>
    </location>
</feature>
<feature type="modified residue" description="Phosphoserine; by PKA and PKG" evidence="4 5 6">
    <location>
        <position position="301"/>
    </location>
</feature>
<feature type="mutagenesis site" description="Loss of phosphorylation. Loss of nuclear localization." evidence="4 5 6">
    <original>S</original>
    <variation>A</variation>
    <location>
        <position position="301"/>
    </location>
</feature>
<feature type="helix" evidence="8">
    <location>
        <begin position="346"/>
        <end position="357"/>
    </location>
</feature>
<feature type="strand" evidence="8">
    <location>
        <begin position="360"/>
        <end position="362"/>
    </location>
</feature>
<feature type="helix" evidence="8">
    <location>
        <begin position="370"/>
        <end position="372"/>
    </location>
</feature>
<feature type="helix" evidence="8">
    <location>
        <begin position="376"/>
        <end position="383"/>
    </location>
</feature>
<feature type="strand" evidence="8">
    <location>
        <begin position="387"/>
        <end position="389"/>
    </location>
</feature>
<feature type="helix" evidence="8">
    <location>
        <begin position="392"/>
        <end position="394"/>
    </location>
</feature>
<feature type="helix" evidence="9">
    <location>
        <begin position="397"/>
        <end position="399"/>
    </location>
</feature>
<feature type="helix" evidence="8">
    <location>
        <begin position="400"/>
        <end position="415"/>
    </location>
</feature>
<feature type="helix" evidence="8">
    <location>
        <begin position="423"/>
        <end position="429"/>
    </location>
</feature>
<feature type="helix" evidence="8">
    <location>
        <begin position="434"/>
        <end position="451"/>
    </location>
</feature>
<proteinExistence type="evidence at protein level"/>
<evidence type="ECO:0000255" key="1"/>
<evidence type="ECO:0000255" key="2">
    <source>
        <dbReference type="PROSITE-ProRule" id="PRU00044"/>
    </source>
</evidence>
<evidence type="ECO:0000256" key="3">
    <source>
        <dbReference type="SAM" id="MobiDB-lite"/>
    </source>
</evidence>
<evidence type="ECO:0000269" key="4">
    <source>
    </source>
</evidence>
<evidence type="ECO:0000269" key="5">
    <source>
    </source>
</evidence>
<evidence type="ECO:0000269" key="6">
    <source>
    </source>
</evidence>
<evidence type="ECO:0000305" key="7"/>
<evidence type="ECO:0007829" key="8">
    <source>
        <dbReference type="PDB" id="2JV9"/>
    </source>
</evidence>
<evidence type="ECO:0007829" key="9">
    <source>
        <dbReference type="PDB" id="2K3S"/>
    </source>
</evidence>
<dbReference type="EMBL" id="AL928914">
    <property type="status" value="NOT_ANNOTATED_CDS"/>
    <property type="molecule type" value="Genomic_DNA"/>
</dbReference>
<dbReference type="EMBL" id="BC002317">
    <property type="protein sequence ID" value="AAH02317.1"/>
    <property type="molecule type" value="mRNA"/>
</dbReference>
<dbReference type="CCDS" id="CCDS16195.1"/>
<dbReference type="RefSeq" id="NP_077192.1">
    <property type="nucleotide sequence ID" value="NM_024230.2"/>
</dbReference>
<dbReference type="RefSeq" id="XP_006500172.1">
    <property type="nucleotide sequence ID" value="XM_006500109.5"/>
</dbReference>
<dbReference type="PDB" id="2JV9">
    <property type="method" value="NMR"/>
    <property type="chains" value="A=346-459"/>
</dbReference>
<dbReference type="PDB" id="2K3S">
    <property type="method" value="NMR"/>
    <property type="chains" value="A=346-459"/>
</dbReference>
<dbReference type="PDBsum" id="2JV9"/>
<dbReference type="PDBsum" id="2K3S"/>
<dbReference type="SMR" id="Q99LM3"/>
<dbReference type="FunCoup" id="Q99LM3">
    <property type="interactions" value="32"/>
</dbReference>
<dbReference type="IntAct" id="Q99LM3">
    <property type="interactions" value="4"/>
</dbReference>
<dbReference type="MINT" id="Q99LM3"/>
<dbReference type="STRING" id="10090.ENSMUSP00000028471"/>
<dbReference type="GlyGen" id="Q99LM3">
    <property type="glycosylation" value="2 sites"/>
</dbReference>
<dbReference type="iPTMnet" id="Q99LM3"/>
<dbReference type="PhosphoSitePlus" id="Q99LM3"/>
<dbReference type="jPOST" id="Q99LM3"/>
<dbReference type="PaxDb" id="10090-ENSMUSP00000028471"/>
<dbReference type="PeptideAtlas" id="Q99LM3"/>
<dbReference type="ProteomicsDB" id="261282"/>
<dbReference type="Antibodypedia" id="48478">
    <property type="antibodies" value="65 antibodies from 14 providers"/>
</dbReference>
<dbReference type="DNASU" id="68678"/>
<dbReference type="Ensembl" id="ENSMUST00000028471.6">
    <property type="protein sequence ID" value="ENSMUSP00000028471.6"/>
    <property type="gene ID" value="ENSMUSG00000027077.8"/>
</dbReference>
<dbReference type="GeneID" id="68678"/>
<dbReference type="KEGG" id="mmu:68678"/>
<dbReference type="UCSC" id="uc008kjg.1">
    <property type="organism name" value="mouse"/>
</dbReference>
<dbReference type="AGR" id="MGI:1915928"/>
<dbReference type="CTD" id="219537"/>
<dbReference type="MGI" id="MGI:1915928">
    <property type="gene designation" value="Smtnl1"/>
</dbReference>
<dbReference type="VEuPathDB" id="HostDB:ENSMUSG00000027077"/>
<dbReference type="eggNOG" id="KOG4678">
    <property type="taxonomic scope" value="Eukaryota"/>
</dbReference>
<dbReference type="GeneTree" id="ENSGT00940000162276"/>
<dbReference type="HOGENOM" id="CLU_040651_5_1_1"/>
<dbReference type="InParanoid" id="Q99LM3"/>
<dbReference type="OMA" id="EWPESPS"/>
<dbReference type="OrthoDB" id="21607at2759"/>
<dbReference type="PhylomeDB" id="Q99LM3"/>
<dbReference type="TreeFam" id="TF316716"/>
<dbReference type="BioGRID-ORCS" id="68678">
    <property type="hits" value="3 hits in 77 CRISPR screens"/>
</dbReference>
<dbReference type="EvolutionaryTrace" id="Q99LM3"/>
<dbReference type="PRO" id="PR:Q99LM3"/>
<dbReference type="Proteomes" id="UP000000589">
    <property type="component" value="Chromosome 2"/>
</dbReference>
<dbReference type="RNAct" id="Q99LM3">
    <property type="molecule type" value="protein"/>
</dbReference>
<dbReference type="Bgee" id="ENSMUSG00000027077">
    <property type="expression patterns" value="Expressed in tarsal region and 45 other cell types or tissues"/>
</dbReference>
<dbReference type="GO" id="GO:0043292">
    <property type="term" value="C:contractile muscle fiber"/>
    <property type="evidence" value="ECO:0000314"/>
    <property type="project" value="UniProtKB"/>
</dbReference>
<dbReference type="GO" id="GO:0005737">
    <property type="term" value="C:cytoplasm"/>
    <property type="evidence" value="ECO:0000314"/>
    <property type="project" value="UniProtKB"/>
</dbReference>
<dbReference type="GO" id="GO:0031674">
    <property type="term" value="C:I band"/>
    <property type="evidence" value="ECO:0000314"/>
    <property type="project" value="MGI"/>
</dbReference>
<dbReference type="GO" id="GO:0031430">
    <property type="term" value="C:M band"/>
    <property type="evidence" value="ECO:0000314"/>
    <property type="project" value="MGI"/>
</dbReference>
<dbReference type="GO" id="GO:0005634">
    <property type="term" value="C:nucleus"/>
    <property type="evidence" value="ECO:0000314"/>
    <property type="project" value="UniProtKB"/>
</dbReference>
<dbReference type="GO" id="GO:0005516">
    <property type="term" value="F:calmodulin binding"/>
    <property type="evidence" value="ECO:0000353"/>
    <property type="project" value="CAFA"/>
</dbReference>
<dbReference type="GO" id="GO:0051401">
    <property type="term" value="F:CH domain binding"/>
    <property type="evidence" value="ECO:0000353"/>
    <property type="project" value="CAFA"/>
</dbReference>
<dbReference type="GO" id="GO:0097718">
    <property type="term" value="F:disordered domain specific binding"/>
    <property type="evidence" value="ECO:0000353"/>
    <property type="project" value="CAFA"/>
</dbReference>
<dbReference type="GO" id="GO:0017020">
    <property type="term" value="F:myosin phosphatase regulator activity"/>
    <property type="evidence" value="ECO:0000266"/>
    <property type="project" value="MGI"/>
</dbReference>
<dbReference type="GO" id="GO:0008157">
    <property type="term" value="F:protein phosphatase 1 binding"/>
    <property type="evidence" value="ECO:0000353"/>
    <property type="project" value="UniProtKB"/>
</dbReference>
<dbReference type="GO" id="GO:0004864">
    <property type="term" value="F:protein phosphatase inhibitor activity"/>
    <property type="evidence" value="ECO:0000266"/>
    <property type="project" value="MGI"/>
</dbReference>
<dbReference type="GO" id="GO:0005523">
    <property type="term" value="F:tropomyosin binding"/>
    <property type="evidence" value="ECO:0000353"/>
    <property type="project" value="CAFA"/>
</dbReference>
<dbReference type="GO" id="GO:0048644">
    <property type="term" value="P:muscle organ morphogenesis"/>
    <property type="evidence" value="ECO:0000315"/>
    <property type="project" value="MGI"/>
</dbReference>
<dbReference type="GO" id="GO:0045892">
    <property type="term" value="P:negative regulation of DNA-templated transcription"/>
    <property type="evidence" value="ECO:0000314"/>
    <property type="project" value="CACAO"/>
</dbReference>
<dbReference type="GO" id="GO:0045907">
    <property type="term" value="P:positive regulation of vasoconstriction"/>
    <property type="evidence" value="ECO:0000315"/>
    <property type="project" value="UniProtKB"/>
</dbReference>
<dbReference type="GO" id="GO:0014823">
    <property type="term" value="P:response to activity"/>
    <property type="evidence" value="ECO:0000315"/>
    <property type="project" value="MGI"/>
</dbReference>
<dbReference type="GO" id="GO:0009410">
    <property type="term" value="P:response to xenobiotic stimulus"/>
    <property type="evidence" value="ECO:0000314"/>
    <property type="project" value="MGI"/>
</dbReference>
<dbReference type="GO" id="GO:0042310">
    <property type="term" value="P:vasoconstriction"/>
    <property type="evidence" value="ECO:0000315"/>
    <property type="project" value="MGI"/>
</dbReference>
<dbReference type="CDD" id="cd21260">
    <property type="entry name" value="CH_SMTNL1"/>
    <property type="match status" value="1"/>
</dbReference>
<dbReference type="DisProt" id="DP00742"/>
<dbReference type="FunFam" id="1.10.418.10:FF:000009">
    <property type="entry name" value="smoothelin isoform X2"/>
    <property type="match status" value="1"/>
</dbReference>
<dbReference type="Gene3D" id="1.10.418.10">
    <property type="entry name" value="Calponin-like domain"/>
    <property type="match status" value="1"/>
</dbReference>
<dbReference type="IDEAL" id="IID50181"/>
<dbReference type="InterPro" id="IPR001715">
    <property type="entry name" value="CH_dom"/>
</dbReference>
<dbReference type="InterPro" id="IPR036872">
    <property type="entry name" value="CH_dom_sf"/>
</dbReference>
<dbReference type="InterPro" id="IPR050540">
    <property type="entry name" value="F-actin_Monoox_Mical"/>
</dbReference>
<dbReference type="PANTHER" id="PTHR23167">
    <property type="entry name" value="CALPONIN HOMOLOGY DOMAIN-CONTAINING PROTEIN DDB_G0272472-RELATED"/>
    <property type="match status" value="1"/>
</dbReference>
<dbReference type="PANTHER" id="PTHR23167:SF45">
    <property type="entry name" value="SMOOTHELIN-LIKE PROTEIN 1"/>
    <property type="match status" value="1"/>
</dbReference>
<dbReference type="Pfam" id="PF00307">
    <property type="entry name" value="CH"/>
    <property type="match status" value="1"/>
</dbReference>
<dbReference type="SMART" id="SM00033">
    <property type="entry name" value="CH"/>
    <property type="match status" value="1"/>
</dbReference>
<dbReference type="SUPFAM" id="SSF47576">
    <property type="entry name" value="Calponin-homology domain, CH-domain"/>
    <property type="match status" value="1"/>
</dbReference>
<dbReference type="PROSITE" id="PS50021">
    <property type="entry name" value="CH"/>
    <property type="match status" value="1"/>
</dbReference>
<reference key="1">
    <citation type="journal article" date="2009" name="PLoS Biol.">
        <title>Lineage-specific biology revealed by a finished genome assembly of the mouse.</title>
        <authorList>
            <person name="Church D.M."/>
            <person name="Goodstadt L."/>
            <person name="Hillier L.W."/>
            <person name="Zody M.C."/>
            <person name="Goldstein S."/>
            <person name="She X."/>
            <person name="Bult C.J."/>
            <person name="Agarwala R."/>
            <person name="Cherry J.L."/>
            <person name="DiCuccio M."/>
            <person name="Hlavina W."/>
            <person name="Kapustin Y."/>
            <person name="Meric P."/>
            <person name="Maglott D."/>
            <person name="Birtle Z."/>
            <person name="Marques A.C."/>
            <person name="Graves T."/>
            <person name="Zhou S."/>
            <person name="Teague B."/>
            <person name="Potamousis K."/>
            <person name="Churas C."/>
            <person name="Place M."/>
            <person name="Herschleb J."/>
            <person name="Runnheim R."/>
            <person name="Forrest D."/>
            <person name="Amos-Landgraf J."/>
            <person name="Schwartz D.C."/>
            <person name="Cheng Z."/>
            <person name="Lindblad-Toh K."/>
            <person name="Eichler E.E."/>
            <person name="Ponting C.P."/>
        </authorList>
    </citation>
    <scope>NUCLEOTIDE SEQUENCE [LARGE SCALE GENOMIC DNA]</scope>
    <source>
        <strain>C57BL/6J</strain>
    </source>
</reference>
<reference key="2">
    <citation type="journal article" date="2004" name="Genome Res.">
        <title>The status, quality, and expansion of the NIH full-length cDNA project: the Mammalian Gene Collection (MGC).</title>
        <authorList>
            <consortium name="The MGC Project Team"/>
        </authorList>
    </citation>
    <scope>NUCLEOTIDE SEQUENCE [LARGE SCALE MRNA]</scope>
    <source>
        <strain>FVB/N</strain>
        <tissue>Mammary tumor</tissue>
    </source>
</reference>
<reference key="3">
    <citation type="journal article" date="2004" name="FEBS Lett.">
        <title>Modulation of smooth muscle contractility by CHASM, a novel member of the smoothelin family of proteins.</title>
        <authorList>
            <person name="Borman M.A."/>
            <person name="MacDonald J.A."/>
            <person name="Haystead T.A."/>
        </authorList>
    </citation>
    <scope>PHOSPHORYLATION AT SER-301</scope>
    <scope>MUTAGENESIS OF SER-301</scope>
</reference>
<reference key="4">
    <citation type="journal article" date="2008" name="J. Biol. Chem.">
        <title>Deletion of the protein kinase A/protein kinase G target SMTNL1 promotes an exercise-adapted phenotype in vascular smooth muscle.</title>
        <authorList>
            <person name="Wooldridge A.A."/>
            <person name="Fortner C.N."/>
            <person name="Lontay B."/>
            <person name="Akimoto T."/>
            <person name="Neppl R.L."/>
            <person name="Facemire C."/>
            <person name="Datto M.B."/>
            <person name="Kwon A."/>
            <person name="McCook E."/>
            <person name="Li P."/>
            <person name="Wang S."/>
            <person name="Thresher R.J."/>
            <person name="Miller S.E."/>
            <person name="Perriard J.C."/>
            <person name="Gavin T.P."/>
            <person name="Hickner R.C."/>
            <person name="Coffman T.M."/>
            <person name="Somlyo A.V."/>
            <person name="Yan Z."/>
            <person name="Haystead T.A."/>
        </authorList>
    </citation>
    <scope>FUNCTION</scope>
    <scope>SUBCELLULAR LOCATION</scope>
    <scope>TISSUE SPECIFICITY</scope>
    <scope>DEVELOPMENTAL STAGE</scope>
    <scope>PHOSPHORYLATION AT SER-301</scope>
    <scope>DISRUPTION PHENOTYPE</scope>
    <scope>INDUCTION</scope>
    <scope>MUTAGENESIS OF SER-301</scope>
</reference>
<reference key="5">
    <citation type="journal article" date="2010" name="Cell">
        <title>A tissue-specific atlas of mouse protein phosphorylation and expression.</title>
        <authorList>
            <person name="Huttlin E.L."/>
            <person name="Jedrychowski M.P."/>
            <person name="Elias J.E."/>
            <person name="Goswami T."/>
            <person name="Rad R."/>
            <person name="Beausoleil S.A."/>
            <person name="Villen J."/>
            <person name="Haas W."/>
            <person name="Sowa M.E."/>
            <person name="Gygi S.P."/>
        </authorList>
    </citation>
    <scope>IDENTIFICATION BY MASS SPECTROMETRY [LARGE SCALE ANALYSIS]</scope>
    <source>
        <tissue>Brown adipose tissue</tissue>
        <tissue>Lung</tissue>
    </source>
</reference>
<reference key="6">
    <citation type="journal article" date="2010" name="J. Biol. Chem.">
        <title>Smoothelin-like 1 protein regulates myosin phosphatase-targeting subunit 1 expression during sexual development and pregnancy.</title>
        <authorList>
            <person name="Lontay B."/>
            <person name="Bodoor K."/>
            <person name="Weitzel D.H."/>
            <person name="Loiselle D."/>
            <person name="Fortner C."/>
            <person name="Lengyel S."/>
            <person name="Zheng D."/>
            <person name="Devente J."/>
            <person name="Hickner R."/>
            <person name="Haystead T.A."/>
        </authorList>
    </citation>
    <scope>FUNCTION</scope>
    <scope>INTERACTION WITH PPP1R12A</scope>
    <scope>SUBCELLULAR LOCATION</scope>
    <scope>TISSUE SPECIFICITY</scope>
    <scope>PHOSPHORYLATION AT SER-301</scope>
    <scope>DEVELOPMENTAL STAGE</scope>
    <scope>DISRUPTION PHENOTYPE</scope>
    <scope>MUTAGENESIS OF SER-301</scope>
</reference>
<reference key="7">
    <citation type="journal article" date="2008" name="J. Biol. Chem.">
        <title>Solution structure of the calponin homology (CH) domain from the smoothelin-like 1 protein: a unique apocalmodulin-binding mode and the possible role of the C-terminal type-2 CH-domain in smooth muscle relaxation.</title>
        <authorList>
            <person name="Ishida H."/>
            <person name="Borman M.A."/>
            <person name="Ostrander J."/>
            <person name="Vogel H.J."/>
            <person name="MacDonald J.A."/>
        </authorList>
    </citation>
    <scope>STRUCTURE BY NMR OF 346-459</scope>
    <scope>CALMODULIN BINDING</scope>
</reference>
<accession>Q99LM3</accession>
<sequence>MEQTEGNSSEDGTTVSPTAGNLETPGSQGIAEEVAEGTVGTSDKEGPSDWAEHLCKAASKSGESGGSPGEASILDELKTDLQGEARGKDEAQGDLAEEKVGKEDTTAASQEDTGKKEETKPEPNEVREKEEAMLASEKQKVDEKETNLESKEKSDVNDKAKPEPKEDAGAEVTVNEAETESQEEADVKDQAKPELPEVDGKETGSDTKELVEPESPTEEQEQGKENESEERAAVIPSSPEEWPESPTDEGPSLSPDGLAPESTGETSPSASESSPSEVPGSPTEPQPSEKKKDRAPERRVSAPSRPRGPRAQNRKAIMDKFGGAASGPTALFRNTKAAGAAIGGVKNMLLEWCRAMTRNYEHVDIQNFSSSWSSGMAFCALIHKFFPEAFDYAELDPAKRRHNFTLAFSTAEKLADCAQLLEVDDMVRLAVPDSKCVYTYIQELYRSLVQKGLVKTKKK</sequence>
<protein>
    <recommendedName>
        <fullName>Smoothelin-like protein 1</fullName>
    </recommendedName>
    <alternativeName>
        <fullName>Calponin homology-associated smooth muscle protein</fullName>
        <shortName>CHASM</shortName>
    </alternativeName>
</protein>
<organism>
    <name type="scientific">Mus musculus</name>
    <name type="common">Mouse</name>
    <dbReference type="NCBI Taxonomy" id="10090"/>
    <lineage>
        <taxon>Eukaryota</taxon>
        <taxon>Metazoa</taxon>
        <taxon>Chordata</taxon>
        <taxon>Craniata</taxon>
        <taxon>Vertebrata</taxon>
        <taxon>Euteleostomi</taxon>
        <taxon>Mammalia</taxon>
        <taxon>Eutheria</taxon>
        <taxon>Euarchontoglires</taxon>
        <taxon>Glires</taxon>
        <taxon>Rodentia</taxon>
        <taxon>Myomorpha</taxon>
        <taxon>Muroidea</taxon>
        <taxon>Muridae</taxon>
        <taxon>Murinae</taxon>
        <taxon>Mus</taxon>
        <taxon>Mus</taxon>
    </lineage>
</organism>
<keyword id="KW-0002">3D-structure</keyword>
<keyword id="KW-0112">Calmodulin-binding</keyword>
<keyword id="KW-0175">Coiled coil</keyword>
<keyword id="KW-0963">Cytoplasm</keyword>
<keyword id="KW-0514">Muscle protein</keyword>
<keyword id="KW-0539">Nucleus</keyword>
<keyword id="KW-0597">Phosphoprotein</keyword>
<keyword id="KW-1185">Reference proteome</keyword>
<name>SMTL1_MOUSE</name>
<comment type="function">
    <text evidence="5 6">Plays a role in the regulation of contractile properties of both striated and smooth muscles. When unphosphorylated, may inhibit myosin dephosphorylation. Phosphorylation at Ser-301 reduces this inhibitory activity.</text>
</comment>
<comment type="subunit">
    <text evidence="6">Interacts with PPP1R12A.</text>
</comment>
<comment type="interaction">
    <interactant intactId="EBI-8073484">
        <id>Q99LM3</id>
    </interactant>
    <interactant intactId="EBI-8073544">
        <id>P04268</id>
        <label>TPM1</label>
    </interactant>
    <organismsDiffer>true</organismsDiffer>
    <experiments>3</experiments>
</comment>
<comment type="subcellular location">
    <subcellularLocation>
        <location>Cytoplasm</location>
        <location>Myofibril</location>
        <location>Sarcomere</location>
        <location>I band</location>
    </subcellularLocation>
    <subcellularLocation>
        <location>Cytoplasm</location>
        <location>Myofibril</location>
        <location>Sarcomere</location>
        <location>M line</location>
    </subcellularLocation>
    <subcellularLocation>
        <location>Nucleus</location>
    </subcellularLocation>
    <text>Colocalizes with MYH2. In its unphosphorylated state, localizes to the cytoplasm. Phosphorylation at Ser-301 promotes translocation to the nucleus.</text>
</comment>
<comment type="tissue specificity">
    <text evidence="5 6">Widely expressed, with highest expression in skeletal muscles (at protein level). Within striated muscles, significantly more expressed in soleus muscle compared with plantaris muscle or white vastus (at protein level). 30-40% lower expression in females than in males (at protein level). Expressed in type 2a fibers, but not detected in fast twitch type 2b muscle white vastus nor in oxidative type I/b heart muscle (at protein level). Expressed within myometrial cells of the uterus, as well as in the endometrial layer. In the aorta, confined to smooth muscle cells. Not detected in endothelial cells.</text>
</comment>
<comment type="developmental stage">
    <text evidence="5 6">Not detected in somites which give rise to skeletal muscle at 10.5 dpc (at protein level). Expressed in skeletal muscle of the tongue, diaphragm and axial muscles from 14.5 through 17.5 dpc (at protein level). Not detected in limb buds (at protein level). Overall increase by up to 10-12-fold in vascular and uterine smooth muscle during pregnancy (at protein level). At day 13 of pregnancy, expression increases in striated muscle by 2.5-fold compared with non-pregnant mice, and by about 2-fold over levels expressed in males (at protein level). At the same time, dramatically increased in myometrial cells of the uterus, in the endometrial layer and in aortal smooth muscle. Steadily declines through parturition and the onset of lactation (at protein level).</text>
</comment>
<comment type="induction">
    <text evidence="5">Significantly reduced by exercise in smooth and in skeletal muscles.</text>
</comment>
<comment type="PTM">
    <text evidence="4 5 6">Maximal phosphorylation of Ser-301 correlates with maximal relaxation of aorta in response to acetylcholine.</text>
</comment>
<comment type="disruption phenotype">
    <text evidence="5 6">Male mutant mice perform better than wild type in exercise stress test after endurance training. Females do not differ significantly during these tests. Even in the absence of endurance exercise, mutant mice exhibit muscle fiber adaptation, i.e. more type 2a fibers and lower levels of type 1b fibers. Endothelium-dependent vasorelaxation of the aorta is enhanced and responses to beta-adrenergic constriction are reduced. Expression of PPP1R12A is 30-40-fold higher in mutant mice than in wild-type littermates and exhibits a steady decline as the animals become sexually mature (at protein level). During pregnancy, by day 13, PPP1R12A expression is dramatically increased to 6-14 times over the levels observed in pregnant wild-type littermates (at protein level). PPP1R12B expression levels are unaffected. In vascular smooth muscle, force development in response to phenylephrine is reduced and both the rate and extent of relaxation in response to acetylcholine are promoted. Myosin dephosphorylation is promoted in mutant animals.</text>
</comment>
<comment type="similarity">
    <text evidence="7">Belongs to the smoothelin family.</text>
</comment>